<reference key="1">
    <citation type="journal article" date="1998" name="J. Biochem.">
        <title>Human dis3p, which binds to either GTP- or GDP-Ran, complements Saccharomyces cerevisiae dis3.</title>
        <authorList>
            <person name="Shiomi T."/>
            <person name="Fukushima K."/>
            <person name="Suzuki N."/>
            <person name="Nakashima N."/>
            <person name="Noguchi E."/>
            <person name="Nishimoto T."/>
        </authorList>
    </citation>
    <scope>NUCLEOTIDE SEQUENCE [MRNA]</scope>
    <scope>CHARACTERIZATION</scope>
</reference>
<reference key="2">
    <citation type="journal article" date="1998" name="J. Biochem.">
        <authorList>
            <person name="Shiomi T."/>
            <person name="Fukushima K."/>
            <person name="Suzuki N."/>
            <person name="Nakashima N."/>
            <person name="Noguchi E."/>
            <person name="Nishimoto T."/>
        </authorList>
    </citation>
    <scope>ERRATUM OF PUBMED:9562621</scope>
</reference>
<reference key="3">
    <citation type="journal article" date="2002" name="Hum. Genet.">
        <title>A genomic map of a 6-Mb region at 13q21-q22 implicated in cancer development: identification and characterization of candidate genes.</title>
        <authorList>
            <person name="Rozenblum E."/>
            <person name="Vahteristo P."/>
            <person name="Sandberg T."/>
            <person name="Bergthorsson J.T."/>
            <person name="Syrjakoski K."/>
            <person name="Weaver D."/>
            <person name="Haraldsson K."/>
            <person name="Johannsdottir H.K."/>
            <person name="Vehmanen P."/>
            <person name="Nigam S."/>
            <person name="Golberger N."/>
            <person name="Robbins C."/>
            <person name="Pak E."/>
            <person name="Dutra A."/>
            <person name="Gillander E."/>
            <person name="Stephan D.A."/>
            <person name="Bailey-Wilson J."/>
            <person name="Juo S.-H.H."/>
            <person name="Kainu T."/>
            <person name="Arason A."/>
            <person name="Barkardottir R.B."/>
            <person name="Nevanlinna H."/>
            <person name="Borg A."/>
            <person name="Kallioniemi O.-P."/>
        </authorList>
    </citation>
    <scope>NUCLEOTIDE SEQUENCE [MRNA] (ISOFORM 1)</scope>
    <scope>VARIANT SER-269</scope>
    <source>
        <tissue>Brain</tissue>
        <tissue>Peripheral blood leukocyte</tissue>
    </source>
</reference>
<reference key="4">
    <citation type="journal article" date="1999" name="DNA Res.">
        <title>Prediction of the coding sequences of unidentified human genes. XIII. The complete sequences of 100 new cDNA clones from brain which code for large proteins in vitro.</title>
        <authorList>
            <person name="Nagase T."/>
            <person name="Ishikawa K."/>
            <person name="Suyama M."/>
            <person name="Kikuno R."/>
            <person name="Hirosawa M."/>
            <person name="Miyajima N."/>
            <person name="Tanaka A."/>
            <person name="Kotani H."/>
            <person name="Nomura N."/>
            <person name="Ohara O."/>
        </authorList>
    </citation>
    <scope>NUCLEOTIDE SEQUENCE [LARGE SCALE MRNA] (ISOFORM 2)</scope>
    <scope>VARIANT ARG-326</scope>
    <source>
        <tissue>Brain</tissue>
    </source>
</reference>
<reference key="5">
    <citation type="journal article" date="2002" name="DNA Res.">
        <title>Construction of expression-ready cDNA clones for KIAA genes: manual curation of 330 KIAA cDNA clones.</title>
        <authorList>
            <person name="Nakajima D."/>
            <person name="Okazaki N."/>
            <person name="Yamakawa H."/>
            <person name="Kikuno R."/>
            <person name="Ohara O."/>
            <person name="Nagase T."/>
        </authorList>
    </citation>
    <scope>SEQUENCE REVISION</scope>
</reference>
<reference key="6">
    <citation type="journal article" date="2004" name="Nat. Genet.">
        <title>Complete sequencing and characterization of 21,243 full-length human cDNAs.</title>
        <authorList>
            <person name="Ota T."/>
            <person name="Suzuki Y."/>
            <person name="Nishikawa T."/>
            <person name="Otsuki T."/>
            <person name="Sugiyama T."/>
            <person name="Irie R."/>
            <person name="Wakamatsu A."/>
            <person name="Hayashi K."/>
            <person name="Sato H."/>
            <person name="Nagai K."/>
            <person name="Kimura K."/>
            <person name="Makita H."/>
            <person name="Sekine M."/>
            <person name="Obayashi M."/>
            <person name="Nishi T."/>
            <person name="Shibahara T."/>
            <person name="Tanaka T."/>
            <person name="Ishii S."/>
            <person name="Yamamoto J."/>
            <person name="Saito K."/>
            <person name="Kawai Y."/>
            <person name="Isono Y."/>
            <person name="Nakamura Y."/>
            <person name="Nagahari K."/>
            <person name="Murakami K."/>
            <person name="Yasuda T."/>
            <person name="Iwayanagi T."/>
            <person name="Wagatsuma M."/>
            <person name="Shiratori A."/>
            <person name="Sudo H."/>
            <person name="Hosoiri T."/>
            <person name="Kaku Y."/>
            <person name="Kodaira H."/>
            <person name="Kondo H."/>
            <person name="Sugawara M."/>
            <person name="Takahashi M."/>
            <person name="Kanda K."/>
            <person name="Yokoi T."/>
            <person name="Furuya T."/>
            <person name="Kikkawa E."/>
            <person name="Omura Y."/>
            <person name="Abe K."/>
            <person name="Kamihara K."/>
            <person name="Katsuta N."/>
            <person name="Sato K."/>
            <person name="Tanikawa M."/>
            <person name="Yamazaki M."/>
            <person name="Ninomiya K."/>
            <person name="Ishibashi T."/>
            <person name="Yamashita H."/>
            <person name="Murakawa K."/>
            <person name="Fujimori K."/>
            <person name="Tanai H."/>
            <person name="Kimata M."/>
            <person name="Watanabe M."/>
            <person name="Hiraoka S."/>
            <person name="Chiba Y."/>
            <person name="Ishida S."/>
            <person name="Ono Y."/>
            <person name="Takiguchi S."/>
            <person name="Watanabe S."/>
            <person name="Yosida M."/>
            <person name="Hotuta T."/>
            <person name="Kusano J."/>
            <person name="Kanehori K."/>
            <person name="Takahashi-Fujii A."/>
            <person name="Hara H."/>
            <person name="Tanase T.-O."/>
            <person name="Nomura Y."/>
            <person name="Togiya S."/>
            <person name="Komai F."/>
            <person name="Hara R."/>
            <person name="Takeuchi K."/>
            <person name="Arita M."/>
            <person name="Imose N."/>
            <person name="Musashino K."/>
            <person name="Yuuki H."/>
            <person name="Oshima A."/>
            <person name="Sasaki N."/>
            <person name="Aotsuka S."/>
            <person name="Yoshikawa Y."/>
            <person name="Matsunawa H."/>
            <person name="Ichihara T."/>
            <person name="Shiohata N."/>
            <person name="Sano S."/>
            <person name="Moriya S."/>
            <person name="Momiyama H."/>
            <person name="Satoh N."/>
            <person name="Takami S."/>
            <person name="Terashima Y."/>
            <person name="Suzuki O."/>
            <person name="Nakagawa S."/>
            <person name="Senoh A."/>
            <person name="Mizoguchi H."/>
            <person name="Goto Y."/>
            <person name="Shimizu F."/>
            <person name="Wakebe H."/>
            <person name="Hishigaki H."/>
            <person name="Watanabe T."/>
            <person name="Sugiyama A."/>
            <person name="Takemoto M."/>
            <person name="Kawakami B."/>
            <person name="Yamazaki M."/>
            <person name="Watanabe K."/>
            <person name="Kumagai A."/>
            <person name="Itakura S."/>
            <person name="Fukuzumi Y."/>
            <person name="Fujimori Y."/>
            <person name="Komiyama M."/>
            <person name="Tashiro H."/>
            <person name="Tanigami A."/>
            <person name="Fujiwara T."/>
            <person name="Ono T."/>
            <person name="Yamada K."/>
            <person name="Fujii Y."/>
            <person name="Ozaki K."/>
            <person name="Hirao M."/>
            <person name="Ohmori Y."/>
            <person name="Kawabata A."/>
            <person name="Hikiji T."/>
            <person name="Kobatake N."/>
            <person name="Inagaki H."/>
            <person name="Ikema Y."/>
            <person name="Okamoto S."/>
            <person name="Okitani R."/>
            <person name="Kawakami T."/>
            <person name="Noguchi S."/>
            <person name="Itoh T."/>
            <person name="Shigeta K."/>
            <person name="Senba T."/>
            <person name="Matsumura K."/>
            <person name="Nakajima Y."/>
            <person name="Mizuno T."/>
            <person name="Morinaga M."/>
            <person name="Sasaki M."/>
            <person name="Togashi T."/>
            <person name="Oyama M."/>
            <person name="Hata H."/>
            <person name="Watanabe M."/>
            <person name="Komatsu T."/>
            <person name="Mizushima-Sugano J."/>
            <person name="Satoh T."/>
            <person name="Shirai Y."/>
            <person name="Takahashi Y."/>
            <person name="Nakagawa K."/>
            <person name="Okumura K."/>
            <person name="Nagase T."/>
            <person name="Nomura N."/>
            <person name="Kikuchi H."/>
            <person name="Masuho Y."/>
            <person name="Yamashita R."/>
            <person name="Nakai K."/>
            <person name="Yada T."/>
            <person name="Nakamura Y."/>
            <person name="Ohara O."/>
            <person name="Isogai T."/>
            <person name="Sugano S."/>
        </authorList>
    </citation>
    <scope>NUCLEOTIDE SEQUENCE [LARGE SCALE MRNA] (ISOFORM 1)</scope>
    <scope>VARIANT SER-269</scope>
    <source>
        <tissue>Trachea</tissue>
    </source>
</reference>
<reference key="7">
    <citation type="journal article" date="2007" name="BMC Genomics">
        <title>The full-ORF clone resource of the German cDNA consortium.</title>
        <authorList>
            <person name="Bechtel S."/>
            <person name="Rosenfelder H."/>
            <person name="Duda A."/>
            <person name="Schmidt C.P."/>
            <person name="Ernst U."/>
            <person name="Wellenreuther R."/>
            <person name="Mehrle A."/>
            <person name="Schuster C."/>
            <person name="Bahr A."/>
            <person name="Bloecker H."/>
            <person name="Heubner D."/>
            <person name="Hoerlein A."/>
            <person name="Michel G."/>
            <person name="Wedler H."/>
            <person name="Koehrer K."/>
            <person name="Ottenwaelder B."/>
            <person name="Poustka A."/>
            <person name="Wiemann S."/>
            <person name="Schupp I."/>
        </authorList>
    </citation>
    <scope>NUCLEOTIDE SEQUENCE [LARGE SCALE MRNA] (ISOFORM 1)</scope>
    <scope>VARIANT SER-269</scope>
    <source>
        <tissue>Lymph node</tissue>
        <tissue>Testis</tissue>
    </source>
</reference>
<reference key="8">
    <citation type="journal article" date="2004" name="Nature">
        <title>The DNA sequence and analysis of human chromosome 13.</title>
        <authorList>
            <person name="Dunham A."/>
            <person name="Matthews L.H."/>
            <person name="Burton J."/>
            <person name="Ashurst J.L."/>
            <person name="Howe K.L."/>
            <person name="Ashcroft K.J."/>
            <person name="Beare D.M."/>
            <person name="Burford D.C."/>
            <person name="Hunt S.E."/>
            <person name="Griffiths-Jones S."/>
            <person name="Jones M.C."/>
            <person name="Keenan S.J."/>
            <person name="Oliver K."/>
            <person name="Scott C.E."/>
            <person name="Ainscough R."/>
            <person name="Almeida J.P."/>
            <person name="Ambrose K.D."/>
            <person name="Andrews D.T."/>
            <person name="Ashwell R.I.S."/>
            <person name="Babbage A.K."/>
            <person name="Bagguley C.L."/>
            <person name="Bailey J."/>
            <person name="Bannerjee R."/>
            <person name="Barlow K.F."/>
            <person name="Bates K."/>
            <person name="Beasley H."/>
            <person name="Bird C.P."/>
            <person name="Bray-Allen S."/>
            <person name="Brown A.J."/>
            <person name="Brown J.Y."/>
            <person name="Burrill W."/>
            <person name="Carder C."/>
            <person name="Carter N.P."/>
            <person name="Chapman J.C."/>
            <person name="Clamp M.E."/>
            <person name="Clark S.Y."/>
            <person name="Clarke G."/>
            <person name="Clee C.M."/>
            <person name="Clegg S.C."/>
            <person name="Cobley V."/>
            <person name="Collins J.E."/>
            <person name="Corby N."/>
            <person name="Coville G.J."/>
            <person name="Deloukas P."/>
            <person name="Dhami P."/>
            <person name="Dunham I."/>
            <person name="Dunn M."/>
            <person name="Earthrowl M.E."/>
            <person name="Ellington A.G."/>
            <person name="Faulkner L."/>
            <person name="Frankish A.G."/>
            <person name="Frankland J."/>
            <person name="French L."/>
            <person name="Garner P."/>
            <person name="Garnett J."/>
            <person name="Gilbert J.G.R."/>
            <person name="Gilson C.J."/>
            <person name="Ghori J."/>
            <person name="Grafham D.V."/>
            <person name="Gribble S.M."/>
            <person name="Griffiths C."/>
            <person name="Hall R.E."/>
            <person name="Hammond S."/>
            <person name="Harley J.L."/>
            <person name="Hart E.A."/>
            <person name="Heath P.D."/>
            <person name="Howden P.J."/>
            <person name="Huckle E.J."/>
            <person name="Hunt P.J."/>
            <person name="Hunt A.R."/>
            <person name="Johnson C."/>
            <person name="Johnson D."/>
            <person name="Kay M."/>
            <person name="Kimberley A.M."/>
            <person name="King A."/>
            <person name="Laird G.K."/>
            <person name="Langford C.J."/>
            <person name="Lawlor S."/>
            <person name="Leongamornlert D.A."/>
            <person name="Lloyd D.M."/>
            <person name="Lloyd C."/>
            <person name="Loveland J.E."/>
            <person name="Lovell J."/>
            <person name="Martin S."/>
            <person name="Mashreghi-Mohammadi M."/>
            <person name="McLaren S.J."/>
            <person name="McMurray A."/>
            <person name="Milne S."/>
            <person name="Moore M.J.F."/>
            <person name="Nickerson T."/>
            <person name="Palmer S.A."/>
            <person name="Pearce A.V."/>
            <person name="Peck A.I."/>
            <person name="Pelan S."/>
            <person name="Phillimore B."/>
            <person name="Porter K.M."/>
            <person name="Rice C.M."/>
            <person name="Searle S."/>
            <person name="Sehra H.K."/>
            <person name="Shownkeen R."/>
            <person name="Skuce C.D."/>
            <person name="Smith M."/>
            <person name="Steward C.A."/>
            <person name="Sycamore N."/>
            <person name="Tester J."/>
            <person name="Thomas D.W."/>
            <person name="Tracey A."/>
            <person name="Tromans A."/>
            <person name="Tubby B."/>
            <person name="Wall M."/>
            <person name="Wallis J.M."/>
            <person name="West A.P."/>
            <person name="Whitehead S.L."/>
            <person name="Willey D.L."/>
            <person name="Wilming L."/>
            <person name="Wray P.W."/>
            <person name="Wright M.W."/>
            <person name="Young L."/>
            <person name="Coulson A."/>
            <person name="Durbin R.M."/>
            <person name="Hubbard T."/>
            <person name="Sulston J.E."/>
            <person name="Beck S."/>
            <person name="Bentley D.R."/>
            <person name="Rogers J."/>
            <person name="Ross M.T."/>
        </authorList>
    </citation>
    <scope>NUCLEOTIDE SEQUENCE [LARGE SCALE GENOMIC DNA]</scope>
</reference>
<reference key="9">
    <citation type="submission" date="2005-07" db="EMBL/GenBank/DDBJ databases">
        <authorList>
            <person name="Mural R.J."/>
            <person name="Istrail S."/>
            <person name="Sutton G.G."/>
            <person name="Florea L."/>
            <person name="Halpern A.L."/>
            <person name="Mobarry C.M."/>
            <person name="Lippert R."/>
            <person name="Walenz B."/>
            <person name="Shatkay H."/>
            <person name="Dew I."/>
            <person name="Miller J.R."/>
            <person name="Flanigan M.J."/>
            <person name="Edwards N.J."/>
            <person name="Bolanos R."/>
            <person name="Fasulo D."/>
            <person name="Halldorsson B.V."/>
            <person name="Hannenhalli S."/>
            <person name="Turner R."/>
            <person name="Yooseph S."/>
            <person name="Lu F."/>
            <person name="Nusskern D.R."/>
            <person name="Shue B.C."/>
            <person name="Zheng X.H."/>
            <person name="Zhong F."/>
            <person name="Delcher A.L."/>
            <person name="Huson D.H."/>
            <person name="Kravitz S.A."/>
            <person name="Mouchard L."/>
            <person name="Reinert K."/>
            <person name="Remington K.A."/>
            <person name="Clark A.G."/>
            <person name="Waterman M.S."/>
            <person name="Eichler E.E."/>
            <person name="Adams M.D."/>
            <person name="Hunkapiller M.W."/>
            <person name="Myers E.W."/>
            <person name="Venter J.C."/>
        </authorList>
    </citation>
    <scope>NUCLEOTIDE SEQUENCE [LARGE SCALE GENOMIC DNA]</scope>
</reference>
<reference key="10">
    <citation type="journal article" date="2004" name="Genome Res.">
        <title>The status, quality, and expansion of the NIH full-length cDNA project: the Mammalian Gene Collection (MGC).</title>
        <authorList>
            <consortium name="The MGC Project Team"/>
        </authorList>
    </citation>
    <scope>NUCLEOTIDE SEQUENCE [LARGE SCALE MRNA] (ISOFORM 1)</scope>
    <scope>VARIANT ARG-326</scope>
    <source>
        <tissue>Lymph</tissue>
    </source>
</reference>
<reference key="11">
    <citation type="journal article" date="2008" name="Science">
        <title>RNA exosome depletion reveals transcription upstream of active human promoters.</title>
        <authorList>
            <person name="Preker P."/>
            <person name="Nielsen J."/>
            <person name="Kammler S."/>
            <person name="Lykke-Andersen S."/>
            <person name="Christensen M.S."/>
            <person name="Mapendano C.K."/>
            <person name="Schierup M.H."/>
            <person name="Jensen T.H."/>
        </authorList>
    </citation>
    <scope>FUNCTION IN PROMPT DEGRADATION</scope>
</reference>
<reference key="12">
    <citation type="journal article" date="2002" name="Mol. Biol. Cell">
        <title>Functional proteomic analysis of human nucleolus.</title>
        <authorList>
            <person name="Scherl A."/>
            <person name="Coute Y."/>
            <person name="Deon C."/>
            <person name="Calle A."/>
            <person name="Kindbeiter K."/>
            <person name="Sanchez J.-C."/>
            <person name="Greco A."/>
            <person name="Hochstrasser D.F."/>
            <person name="Diaz J.-J."/>
        </authorList>
    </citation>
    <scope>SUBCELLULAR LOCATION [LARGE SCALE ANALYSIS]</scope>
    <source>
        <tissue>Cervix carcinoma</tissue>
    </source>
</reference>
<reference key="13">
    <citation type="journal article" date="2009" name="Science">
        <title>Lysine acetylation targets protein complexes and co-regulates major cellular functions.</title>
        <authorList>
            <person name="Choudhary C."/>
            <person name="Kumar C."/>
            <person name="Gnad F."/>
            <person name="Nielsen M.L."/>
            <person name="Rehman M."/>
            <person name="Walther T.C."/>
            <person name="Olsen J.V."/>
            <person name="Mann M."/>
        </authorList>
    </citation>
    <scope>ACETYLATION [LARGE SCALE ANALYSIS] AT LYS-18</scope>
    <scope>IDENTIFICATION BY MASS SPECTROMETRY [LARGE SCALE ANALYSIS]</scope>
</reference>
<reference key="14">
    <citation type="journal article" date="2010" name="EMBO J.">
        <title>The human core exosome interacts with differentially localized processive RNases: hDIS3 and hDIS3L.</title>
        <authorList>
            <person name="Tomecki R."/>
            <person name="Kristiansen M.S."/>
            <person name="Lykke-Andersen S."/>
            <person name="Chlebowski A."/>
            <person name="Larsen K.M."/>
            <person name="Szczesny R.J."/>
            <person name="Drazkowska K."/>
            <person name="Pastula A."/>
            <person name="Andersen J.S."/>
            <person name="Stepien P.P."/>
            <person name="Dziembowski A."/>
            <person name="Jensen T.H."/>
        </authorList>
    </citation>
    <scope>ASSOCIATION WITH THE RNA EXOSOME COMPLEX</scope>
    <scope>IDENTIFICATION BY MASS SPECTROMETRY</scope>
    <scope>FUNCTION</scope>
    <scope>COFACTOR</scope>
    <scope>SUBCELLULAR LOCATION</scope>
    <scope>MUTAGENESIS OF ASP-146 AND ASP-487</scope>
</reference>
<reference key="15">
    <citation type="journal article" date="2010" name="EMBO J.">
        <title>Dis3-like 1: a novel exoribonuclease associated with the human exosome.</title>
        <authorList>
            <person name="Staals R.H."/>
            <person name="Bronkhorst A.W."/>
            <person name="Schilders G."/>
            <person name="Slomovic S."/>
            <person name="Schuster G."/>
            <person name="Heck A.J."/>
            <person name="Raijmakers R."/>
            <person name="Pruijn G.J."/>
        </authorList>
    </citation>
    <scope>ASSOCIATION WITH THE RNA EXOSOME COMPLEX</scope>
    <scope>IDENTIFICATION BY MASS SPECTROMETRY</scope>
    <scope>SUBCELLULAR LOCATION</scope>
    <scope>INTERACTION WITH EXOSC3</scope>
</reference>
<reference key="16">
    <citation type="journal article" date="2011" name="BMC Syst. Biol.">
        <title>Initial characterization of the human central proteome.</title>
        <authorList>
            <person name="Burkard T.R."/>
            <person name="Planyavsky M."/>
            <person name="Kaupe I."/>
            <person name="Breitwieser F.P."/>
            <person name="Buerckstuemmer T."/>
            <person name="Bennett K.L."/>
            <person name="Superti-Furga G."/>
            <person name="Colinge J."/>
        </authorList>
    </citation>
    <scope>IDENTIFICATION BY MASS SPECTROMETRY [LARGE SCALE ANALYSIS]</scope>
</reference>
<reference key="17">
    <citation type="journal article" date="2012" name="Proc. Natl. Acad. Sci. U.S.A.">
        <title>N-terminal acetylome analyses and functional insights of the N-terminal acetyltransferase NatB.</title>
        <authorList>
            <person name="Van Damme P."/>
            <person name="Lasa M."/>
            <person name="Polevoda B."/>
            <person name="Gazquez C."/>
            <person name="Elosegui-Artola A."/>
            <person name="Kim D.S."/>
            <person name="De Juan-Pardo E."/>
            <person name="Demeyer K."/>
            <person name="Hole K."/>
            <person name="Larrea E."/>
            <person name="Timmerman E."/>
            <person name="Prieto J."/>
            <person name="Arnesen T."/>
            <person name="Sherman F."/>
            <person name="Gevaert K."/>
            <person name="Aldabe R."/>
        </authorList>
    </citation>
    <scope>ACETYLATION [LARGE SCALE ANALYSIS] AT MET-1</scope>
    <scope>IDENTIFICATION BY MASS SPECTROMETRY [LARGE SCALE ANALYSIS]</scope>
</reference>
<reference key="18">
    <citation type="journal article" date="2013" name="J. Proteome Res.">
        <title>Toward a comprehensive characterization of a human cancer cell phosphoproteome.</title>
        <authorList>
            <person name="Zhou H."/>
            <person name="Di Palma S."/>
            <person name="Preisinger C."/>
            <person name="Peng M."/>
            <person name="Polat A.N."/>
            <person name="Heck A.J."/>
            <person name="Mohammed S."/>
        </authorList>
    </citation>
    <scope>PHOSPHORYLATION [LARGE SCALE ANALYSIS] AT SER-215</scope>
    <scope>IDENTIFICATION BY MASS SPECTROMETRY [LARGE SCALE ANALYSIS]</scope>
    <source>
        <tissue>Cervix carcinoma</tissue>
        <tissue>Erythroleukemia</tissue>
    </source>
</reference>
<reference key="19">
    <citation type="journal article" date="2014" name="Cell Rep.">
        <title>The RNA helicase DHX34 activates NMD by promoting a transition from the surveillance to the decay-inducing complex.</title>
        <authorList>
            <person name="Hug N."/>
            <person name="Caceres J.F."/>
        </authorList>
    </citation>
    <scope>INTERACTION WITH DHX34</scope>
</reference>
<reference evidence="17 18" key="20">
    <citation type="journal article" date="2018" name="Cell">
        <title>Helicase-Dependent RNA Decay Illuminated by a Cryo-EM Structure of a Human Nuclear RNA Exosome-MTR4 Complex.</title>
        <authorList>
            <person name="Weick E.M."/>
            <person name="Puno M.R."/>
            <person name="Januszyk K."/>
            <person name="Zinder J.C."/>
            <person name="DiMattia M.A."/>
            <person name="Lima C.D."/>
        </authorList>
    </citation>
    <scope>STRUCTURE BY ELECTRON MICROSCOPY (3.45 ANGSTROMS)</scope>
    <scope>SUBUNIT</scope>
</reference>
<reference evidence="19" key="21">
    <citation type="journal article" date="2018" name="Elife">
        <title>Distinct and evolutionary conserved structural features of the human nuclear exosome complex.</title>
        <authorList>
            <person name="Gerlach P."/>
            <person name="Schuller J.M."/>
            <person name="Bonneau F."/>
            <person name="Basquin J."/>
            <person name="Reichelt P."/>
            <person name="Falk S."/>
            <person name="Conti E."/>
        </authorList>
    </citation>
    <scope>STRUCTURE BY ELECTRON MICROSCOPY (3.80 ANGSTROMS) OF MUTANT ASN-146 AND ASN-487 IN THE RNA EXOSOME COMPLEX IN COMPLEX WITH MPP6</scope>
    <scope>SUBUNIT</scope>
</reference>
<comment type="function">
    <text evidence="9 10">Putative catalytic component of the RNA exosome complex which has 3'-&gt;5' exoribonuclease activity and participates in a multitude of cellular RNA processing and degradation events. In the nucleus, the RNA exosome complex is involved in proper maturation of stable RNA species such as rRNA, snRNA and snoRNA, in the elimination of RNA processing by-products and non-coding 'pervasive' transcripts, such as antisense RNA species and promoter-upstream transcripts (PROMPTs), and of mRNAs with processing defects, thereby limiting or excluding their export to the cytoplasm. The RNA exosome may be involved in Ig class switch recombination (CSR) and/or Ig variable region somatic hypermutation (SHM) by targeting AICDA deamination activity to transcribed dsDNA substrates. In the cytoplasm, the RNA exosome complex is involved in general mRNA turnover and specifically degrades inherently unstable mRNAs containing AU-rich elements (AREs) within their 3' untranslated regions, and in RNA surveillance pathways, preventing translation of aberrant mRNAs. It seems to be involved in degradation of histone mRNA. DIS3 has both 3'-5' exonuclease and endonuclease activities.</text>
</comment>
<comment type="cofactor">
    <cofactor evidence="10">
        <name>Mg(2+)</name>
        <dbReference type="ChEBI" id="CHEBI:18420"/>
    </cofactor>
    <cofactor evidence="10">
        <name>Mn(2+)</name>
        <dbReference type="ChEBI" id="CHEBI:29035"/>
    </cofactor>
</comment>
<comment type="subunit">
    <text evidence="11 12 13 14">Component of the RNA exosome complex; within the complex interacts with EXOSC4, EXOSC7 and EXOSC9 of the exosome core complex (Exo-9) (PubMed:29906447, PubMed:30047866). The catalytically inactive RNA exosome core complex (Exo-9) associates with the catalytic subunit EXOSC10/RRP6 (PubMed:20531389, PubMed:29906447). Exo-9 may associate with DIS3 to form the nucleolar exosome complex, or DIS3L to form the cytoplasmic exosome complex (PubMed:20531389, PubMed:29906447). Exo-9 is formed by a hexameric base ring consisting of the heterodimers EXOSC4-EXOSC9, EXOSC5-EXOSC8 and EXOSC6-EXOSC7, and a cap ring consisting of EXOSC1, EXOSC2 and EXOSC3; DIS3 associates with the base ring of Exo-9 (PubMed:20531389, PubMed:30047866). The RNA exosome complex associates with cofactors C1D/RRP47, MPHOSPH6/MPP6 and MTREX/MTR4 (PubMed:30047866). Interacts with DHX34; the interaction is RNA-independent (PubMed:25220460).</text>
</comment>
<comment type="interaction">
    <interactant intactId="EBI-373539">
        <id>Q9Y2L1</id>
    </interactant>
    <interactant intactId="EBI-358236">
        <id>Q01780</id>
        <label>EXOSC10</label>
    </interactant>
    <organismsDiffer>false</organismsDiffer>
    <experiments>4</experiments>
</comment>
<comment type="interaction">
    <interactant intactId="EBI-373539">
        <id>Q9Y2L1</id>
    </interactant>
    <interactant intactId="EBI-301735">
        <id>Q13868</id>
        <label>EXOSC2</label>
    </interactant>
    <organismsDiffer>false</organismsDiffer>
    <experiments>3</experiments>
</comment>
<comment type="interaction">
    <interactant intactId="EBI-373539">
        <id>Q9Y2L1</id>
    </interactant>
    <interactant intactId="EBI-371866">
        <id>Q9NQT5</id>
        <label>EXOSC3</label>
    </interactant>
    <organismsDiffer>false</organismsDiffer>
    <experiments>4</experiments>
</comment>
<comment type="subcellular location">
    <subcellularLocation>
        <location evidence="10">Cytoplasm</location>
    </subcellularLocation>
    <subcellularLocation>
        <location evidence="5">Nucleus</location>
        <location evidence="5">Nucleolus</location>
    </subcellularLocation>
    <subcellularLocation>
        <location evidence="11">Nucleus</location>
        <location evidence="11">Nucleoplasm</location>
    </subcellularLocation>
    <subcellularLocation>
        <location evidence="10">Nucleus</location>
    </subcellularLocation>
    <text evidence="5 10">Predominantly located in the nucleus (PubMed:20531386). According to PubMed:12429849, found in the nucleolus (PubMed:12429849). According to PubMed:20531386, excluded from nucleolus supporting the existence of a nucleolar RNA exosome complex devoid of DIS3 (PubMed:20531386).</text>
</comment>
<comment type="alternative products">
    <event type="alternative splicing"/>
    <isoform>
        <id>Q9Y2L1-1</id>
        <name>1</name>
        <sequence type="displayed"/>
    </isoform>
    <isoform>
        <id>Q9Y2L1-2</id>
        <name>2</name>
        <sequence type="described" ref="VSP_014971"/>
    </isoform>
</comment>
<comment type="tissue specificity">
    <text>Widely expressed.</text>
</comment>
<comment type="miscellaneous">
    <text>The association of DIS3 with the RNA exosome complex appears to be weak explaining its absence in some complex purifications.</text>
</comment>
<comment type="similarity">
    <text evidence="16">Belongs to the RNR ribonuclease family.</text>
</comment>
<comment type="sequence caution" evidence="16">
    <conflict type="erroneous initiation">
        <sequence resource="EMBL-CDS" id="BAA76852"/>
    </conflict>
    <text>Extended N-terminus.</text>
</comment>
<keyword id="KW-0002">3D-structure</keyword>
<keyword id="KW-0007">Acetylation</keyword>
<keyword id="KW-0025">Alternative splicing</keyword>
<keyword id="KW-0963">Cytoplasm</keyword>
<keyword id="KW-0255">Endonuclease</keyword>
<keyword id="KW-0269">Exonuclease</keyword>
<keyword id="KW-0271">Exosome</keyword>
<keyword id="KW-0378">Hydrolase</keyword>
<keyword id="KW-0460">Magnesium</keyword>
<keyword id="KW-0464">Manganese</keyword>
<keyword id="KW-0540">Nuclease</keyword>
<keyword id="KW-0539">Nucleus</keyword>
<keyword id="KW-0597">Phosphoprotein</keyword>
<keyword id="KW-1267">Proteomics identification</keyword>
<keyword id="KW-1185">Reference proteome</keyword>
<keyword id="KW-0694">RNA-binding</keyword>
<keyword id="KW-0698">rRNA processing</keyword>
<name>RRP44_HUMAN</name>
<protein>
    <recommendedName>
        <fullName>Exosome complex exonuclease RRP44</fullName>
        <ecNumber>3.1.13.-</ecNumber>
        <ecNumber>3.1.26.-</ecNumber>
    </recommendedName>
    <alternativeName>
        <fullName>Protein DIS3 homolog</fullName>
    </alternativeName>
    <alternativeName>
        <fullName>Ribosomal RNA-processing protein 44</fullName>
    </alternativeName>
</protein>
<sequence length="958" mass="109003">MLKSKTFLKKTRAGGVMKIVREHYLRDDIGCGAPGCAACGGAHEGPALEPQPQDPASSVCPQPHYLLPDTNVLLHQIDVLEDPAIRNVIVLQTVLQEVRNRSAPVYKRIRDVTNNQEKHFYTFTNEHHRETYVEQEQGENANDRNDRAIRVAAKWYNEHLKKMSADNQLQVIFITNDRRNKEKAIEEGIPAFTCEEYVKSLTANPELIDRLACLSEEGNEIESGKIIFSEHLPLSKLQQGIKSGTYLQGTFRASRENYLEATVWIHGDNEENKEIILQGLKHLNRAVHEDIVAVELLPKSQWVAPSSVVLHDEGQNEEDVEKEEETERMLKTAVSEKMLKPTGRVVGIIKRNWRPYCGMLSKSDIKESRRHLFTPADKRIPRIRIETRQASTLEGRRIIVAIDGWPRNSRYPNGHFVRNLGDVGEKETETEVLLLEHDVPHQPFSQAVLSFLPKMPWSITEKDMKNREDLRHLCICSVDPPGCTDIDDALHCRELENGNLEVGVHIADVSHFIRPGNALDQESARRGTTVYLCEKRIDMVPELLSSNLCSLKCDVDRLAFSCIWEMNHNAEILKTKFTKSVINSKASLTYAEAQLRIDSANMNDDITTSLRGLNKLAKILKKRRIEKGALTLSSPEVRFHMDSETHDPIDLQTKELRETNSMVEEFMLLANISVAKKIHEEFSEHALLRKHPAPPPSNYEILVKAARSRNLEIKTDTAKSLAESLDQAESPTFPYLNTLLRILATRCMMQAVYFCSGMDNDFHHYGLASPIYTHFTSPIRRYADVIVHRLLAVAIGADCTYPELTDKHKLADICKNLNFRHKMAQYAQRASVAFHTQLFFKSKGIVSEEAYILFVRKNAIVVLIPKYGLEGTVFFEEKDKPNPQLIYDDEIPSLKIEDTVFHVFDKVKVKIMLDSSNLQHQKIRMSLVEPQIPGISIPTDTSNMDLNGPKKKKMKLGK</sequence>
<proteinExistence type="evidence at protein level"/>
<dbReference type="EC" id="3.1.13.-"/>
<dbReference type="EC" id="3.1.26.-"/>
<dbReference type="EMBL" id="AF330044">
    <property type="protein sequence ID" value="AAL37479.1"/>
    <property type="molecule type" value="mRNA"/>
</dbReference>
<dbReference type="EMBL" id="AB023225">
    <property type="protein sequence ID" value="BAA76852.2"/>
    <property type="status" value="ALT_INIT"/>
    <property type="molecule type" value="mRNA"/>
</dbReference>
<dbReference type="EMBL" id="AL832266">
    <property type="protein sequence ID" value="CAH56266.1"/>
    <property type="molecule type" value="mRNA"/>
</dbReference>
<dbReference type="EMBL" id="AK314715">
    <property type="protein sequence ID" value="BAG37259.1"/>
    <property type="molecule type" value="mRNA"/>
</dbReference>
<dbReference type="EMBL" id="AL080158">
    <property type="protein sequence ID" value="CAB45749.1"/>
    <property type="molecule type" value="mRNA"/>
</dbReference>
<dbReference type="EMBL" id="AL138695">
    <property type="status" value="NOT_ANNOTATED_CDS"/>
    <property type="molecule type" value="Genomic_DNA"/>
</dbReference>
<dbReference type="EMBL" id="AL391384">
    <property type="status" value="NOT_ANNOTATED_CDS"/>
    <property type="molecule type" value="Genomic_DNA"/>
</dbReference>
<dbReference type="EMBL" id="CH471093">
    <property type="protein sequence ID" value="EAW80517.1"/>
    <property type="molecule type" value="Genomic_DNA"/>
</dbReference>
<dbReference type="EMBL" id="BC056143">
    <property type="protein sequence ID" value="AAH56143.1"/>
    <property type="molecule type" value="mRNA"/>
</dbReference>
<dbReference type="CCDS" id="CCDS45057.1">
    <molecule id="Q9Y2L1-2"/>
</dbReference>
<dbReference type="CCDS" id="CCDS9447.1">
    <molecule id="Q9Y2L1-1"/>
</dbReference>
<dbReference type="PIR" id="JE0110">
    <property type="entry name" value="JE0110"/>
</dbReference>
<dbReference type="RefSeq" id="NP_001121698.1">
    <molecule id="Q9Y2L1-2"/>
    <property type="nucleotide sequence ID" value="NM_001128226.3"/>
</dbReference>
<dbReference type="RefSeq" id="NP_055768.3">
    <molecule id="Q9Y2L1-1"/>
    <property type="nucleotide sequence ID" value="NM_014953.4"/>
</dbReference>
<dbReference type="PDB" id="6D6Q">
    <property type="method" value="EM"/>
    <property type="resolution" value="3.45 A"/>
    <property type="chains" value="K=1-958"/>
</dbReference>
<dbReference type="PDB" id="6D6R">
    <property type="method" value="EM"/>
    <property type="resolution" value="3.45 A"/>
    <property type="chains" value="K=1-958"/>
</dbReference>
<dbReference type="PDB" id="6H25">
    <property type="method" value="EM"/>
    <property type="resolution" value="3.80 A"/>
    <property type="chains" value="J=1-958"/>
</dbReference>
<dbReference type="PDBsum" id="6D6Q"/>
<dbReference type="PDBsum" id="6D6R"/>
<dbReference type="PDBsum" id="6H25"/>
<dbReference type="EMDB" id="EMD-0127"/>
<dbReference type="EMDB" id="EMD-0128"/>
<dbReference type="EMDB" id="EMD-14515"/>
<dbReference type="EMDB" id="EMD-7808"/>
<dbReference type="EMDB" id="EMD-7809"/>
<dbReference type="SMR" id="Q9Y2L1"/>
<dbReference type="BioGRID" id="116559">
    <property type="interactions" value="216"/>
</dbReference>
<dbReference type="ComplexPortal" id="CPX-476">
    <property type="entry name" value="Nuclear exosome complex, DIS3-EXOSC10 variant"/>
</dbReference>
<dbReference type="ComplexPortal" id="CPX-593">
    <property type="entry name" value="Exosome complex, DIS3 variant"/>
</dbReference>
<dbReference type="CORUM" id="Q9Y2L1"/>
<dbReference type="FunCoup" id="Q9Y2L1">
    <property type="interactions" value="3467"/>
</dbReference>
<dbReference type="IntAct" id="Q9Y2L1">
    <property type="interactions" value="100"/>
</dbReference>
<dbReference type="MINT" id="Q9Y2L1"/>
<dbReference type="STRING" id="9606.ENSP00000366997"/>
<dbReference type="GlyGen" id="Q9Y2L1">
    <property type="glycosylation" value="1 site, 1 O-linked glycan (1 site)"/>
</dbReference>
<dbReference type="iPTMnet" id="Q9Y2L1"/>
<dbReference type="MetOSite" id="Q9Y2L1"/>
<dbReference type="PhosphoSitePlus" id="Q9Y2L1"/>
<dbReference type="SwissPalm" id="Q9Y2L1"/>
<dbReference type="BioMuta" id="DIS3"/>
<dbReference type="DMDM" id="73620993"/>
<dbReference type="jPOST" id="Q9Y2L1"/>
<dbReference type="MassIVE" id="Q9Y2L1"/>
<dbReference type="PaxDb" id="9606-ENSP00000366997"/>
<dbReference type="PeptideAtlas" id="Q9Y2L1"/>
<dbReference type="ProteomicsDB" id="85832">
    <molecule id="Q9Y2L1-1"/>
</dbReference>
<dbReference type="ProteomicsDB" id="85833">
    <molecule id="Q9Y2L1-2"/>
</dbReference>
<dbReference type="Pumba" id="Q9Y2L1"/>
<dbReference type="Antibodypedia" id="24401">
    <property type="antibodies" value="225 antibodies from 30 providers"/>
</dbReference>
<dbReference type="DNASU" id="22894"/>
<dbReference type="Ensembl" id="ENST00000377767.9">
    <molecule id="Q9Y2L1-1"/>
    <property type="protein sequence ID" value="ENSP00000366997.4"/>
    <property type="gene ID" value="ENSG00000083520.15"/>
</dbReference>
<dbReference type="Ensembl" id="ENST00000377780.8">
    <molecule id="Q9Y2L1-2"/>
    <property type="protein sequence ID" value="ENSP00000367011.4"/>
    <property type="gene ID" value="ENSG00000083520.15"/>
</dbReference>
<dbReference type="GeneID" id="22894"/>
<dbReference type="KEGG" id="hsa:22894"/>
<dbReference type="MANE-Select" id="ENST00000377767.9">
    <property type="protein sequence ID" value="ENSP00000366997.4"/>
    <property type="RefSeq nucleotide sequence ID" value="NM_014953.5"/>
    <property type="RefSeq protein sequence ID" value="NP_055768.3"/>
</dbReference>
<dbReference type="UCSC" id="uc001vix.6">
    <molecule id="Q9Y2L1-1"/>
    <property type="organism name" value="human"/>
</dbReference>
<dbReference type="AGR" id="HGNC:20604"/>
<dbReference type="CTD" id="22894"/>
<dbReference type="DisGeNET" id="22894"/>
<dbReference type="GeneCards" id="DIS3"/>
<dbReference type="HGNC" id="HGNC:20604">
    <property type="gene designation" value="DIS3"/>
</dbReference>
<dbReference type="HPA" id="ENSG00000083520">
    <property type="expression patterns" value="Low tissue specificity"/>
</dbReference>
<dbReference type="MalaCards" id="DIS3"/>
<dbReference type="MIM" id="607533">
    <property type="type" value="gene"/>
</dbReference>
<dbReference type="neXtProt" id="NX_Q9Y2L1"/>
<dbReference type="OpenTargets" id="ENSG00000083520"/>
<dbReference type="PharmGKB" id="PA162383628"/>
<dbReference type="VEuPathDB" id="HostDB:ENSG00000083520"/>
<dbReference type="eggNOG" id="KOG2102">
    <property type="taxonomic scope" value="Eukaryota"/>
</dbReference>
<dbReference type="GeneTree" id="ENSGT00530000063106"/>
<dbReference type="InParanoid" id="Q9Y2L1"/>
<dbReference type="OMA" id="GQVMRNN"/>
<dbReference type="OrthoDB" id="372421at2759"/>
<dbReference type="PAN-GO" id="Q9Y2L1">
    <property type="GO annotations" value="5 GO annotations based on evolutionary models"/>
</dbReference>
<dbReference type="PhylomeDB" id="Q9Y2L1"/>
<dbReference type="TreeFam" id="TF105755"/>
<dbReference type="PathwayCommons" id="Q9Y2L1"/>
<dbReference type="Reactome" id="R-HSA-380994">
    <property type="pathway name" value="ATF4 activates genes in response to endoplasmic reticulum stress"/>
</dbReference>
<dbReference type="Reactome" id="R-HSA-429958">
    <property type="pathway name" value="mRNA decay by 3' to 5' exoribonuclease"/>
</dbReference>
<dbReference type="Reactome" id="R-HSA-450385">
    <property type="pathway name" value="Butyrate Response Factor 1 (BRF1) binds and destabilizes mRNA"/>
</dbReference>
<dbReference type="Reactome" id="R-HSA-450513">
    <property type="pathway name" value="Tristetraprolin (TTP, ZFP36) binds and destabilizes mRNA"/>
</dbReference>
<dbReference type="Reactome" id="R-HSA-450604">
    <property type="pathway name" value="KSRP (KHSRP) binds and destabilizes mRNA"/>
</dbReference>
<dbReference type="Reactome" id="R-HSA-6791226">
    <property type="pathway name" value="Major pathway of rRNA processing in the nucleolus and cytosol"/>
</dbReference>
<dbReference type="SignaLink" id="Q9Y2L1"/>
<dbReference type="BioGRID-ORCS" id="22894">
    <property type="hits" value="602 hits in 1175 CRISPR screens"/>
</dbReference>
<dbReference type="CD-CODE" id="1A18FFC4">
    <property type="entry name" value="Paraspeckle"/>
</dbReference>
<dbReference type="CD-CODE" id="91857CE7">
    <property type="entry name" value="Nucleolus"/>
</dbReference>
<dbReference type="ChiTaRS" id="DIS3">
    <property type="organism name" value="human"/>
</dbReference>
<dbReference type="GeneWiki" id="DIS3"/>
<dbReference type="GenomeRNAi" id="22894"/>
<dbReference type="Pharos" id="Q9Y2L1">
    <property type="development level" value="Tbio"/>
</dbReference>
<dbReference type="PRO" id="PR:Q9Y2L1"/>
<dbReference type="Proteomes" id="UP000005640">
    <property type="component" value="Chromosome 13"/>
</dbReference>
<dbReference type="RNAct" id="Q9Y2L1">
    <property type="molecule type" value="protein"/>
</dbReference>
<dbReference type="Bgee" id="ENSG00000083520">
    <property type="expression patterns" value="Expressed in sperm and 191 other cell types or tissues"/>
</dbReference>
<dbReference type="ExpressionAtlas" id="Q9Y2L1">
    <property type="expression patterns" value="baseline and differential"/>
</dbReference>
<dbReference type="GO" id="GO:0000177">
    <property type="term" value="C:cytoplasmic exosome (RNase complex)"/>
    <property type="evidence" value="ECO:0000318"/>
    <property type="project" value="GO_Central"/>
</dbReference>
<dbReference type="GO" id="GO:0005829">
    <property type="term" value="C:cytosol"/>
    <property type="evidence" value="ECO:0000314"/>
    <property type="project" value="HPA"/>
</dbReference>
<dbReference type="GO" id="GO:0000178">
    <property type="term" value="C:exosome (RNase complex)"/>
    <property type="evidence" value="ECO:0000304"/>
    <property type="project" value="UniProtKB"/>
</dbReference>
<dbReference type="GO" id="GO:0016020">
    <property type="term" value="C:membrane"/>
    <property type="evidence" value="ECO:0007005"/>
    <property type="project" value="UniProtKB"/>
</dbReference>
<dbReference type="GO" id="GO:0000176">
    <property type="term" value="C:nuclear exosome (RNase complex)"/>
    <property type="evidence" value="ECO:0000314"/>
    <property type="project" value="UniProtKB"/>
</dbReference>
<dbReference type="GO" id="GO:0005654">
    <property type="term" value="C:nucleoplasm"/>
    <property type="evidence" value="ECO:0000314"/>
    <property type="project" value="HPA"/>
</dbReference>
<dbReference type="GO" id="GO:0005634">
    <property type="term" value="C:nucleus"/>
    <property type="evidence" value="ECO:0000314"/>
    <property type="project" value="ComplexPortal"/>
</dbReference>
<dbReference type="GO" id="GO:0000175">
    <property type="term" value="F:3'-5'-RNA exonuclease activity"/>
    <property type="evidence" value="ECO:0000315"/>
    <property type="project" value="UniProtKB"/>
</dbReference>
<dbReference type="GO" id="GO:0004519">
    <property type="term" value="F:endonuclease activity"/>
    <property type="evidence" value="ECO:0000315"/>
    <property type="project" value="UniProtKB"/>
</dbReference>
<dbReference type="GO" id="GO:0005085">
    <property type="term" value="F:guanyl-nucleotide exchange factor activity"/>
    <property type="evidence" value="ECO:0000314"/>
    <property type="project" value="UniProtKB"/>
</dbReference>
<dbReference type="GO" id="GO:0003723">
    <property type="term" value="F:RNA binding"/>
    <property type="evidence" value="ECO:0007669"/>
    <property type="project" value="UniProtKB-KW"/>
</dbReference>
<dbReference type="GO" id="GO:0071034">
    <property type="term" value="P:CUT catabolic process"/>
    <property type="evidence" value="ECO:0000315"/>
    <property type="project" value="UniProtKB"/>
</dbReference>
<dbReference type="GO" id="GO:0071031">
    <property type="term" value="P:nuclear mRNA surveillance of mRNA 3'-end processing"/>
    <property type="evidence" value="ECO:0000318"/>
    <property type="project" value="GO_Central"/>
</dbReference>
<dbReference type="GO" id="GO:0000288">
    <property type="term" value="P:nuclear-transcribed mRNA catabolic process, deadenylation-dependent decay"/>
    <property type="evidence" value="ECO:0000304"/>
    <property type="project" value="Reactome"/>
</dbReference>
<dbReference type="GO" id="GO:0006401">
    <property type="term" value="P:RNA catabolic process"/>
    <property type="evidence" value="ECO:0000314"/>
    <property type="project" value="ComplexPortal"/>
</dbReference>
<dbReference type="GO" id="GO:0006396">
    <property type="term" value="P:RNA processing"/>
    <property type="evidence" value="ECO:0000314"/>
    <property type="project" value="ComplexPortal"/>
</dbReference>
<dbReference type="GO" id="GO:0016075">
    <property type="term" value="P:rRNA catabolic process"/>
    <property type="evidence" value="ECO:0000315"/>
    <property type="project" value="UniProtKB"/>
</dbReference>
<dbReference type="GO" id="GO:0006364">
    <property type="term" value="P:rRNA processing"/>
    <property type="evidence" value="ECO:0000304"/>
    <property type="project" value="UniProtKB"/>
</dbReference>
<dbReference type="CDD" id="cd09862">
    <property type="entry name" value="PIN_Rrp44-like"/>
    <property type="match status" value="1"/>
</dbReference>
<dbReference type="FunFam" id="3.40.50.1010:FF:000010">
    <property type="entry name" value="Exosome complex exonuclease DIS3"/>
    <property type="match status" value="1"/>
</dbReference>
<dbReference type="FunFam" id="2.40.50.700:FF:000001">
    <property type="entry name" value="Exosome complex exonuclease exoribonuclease (Rrp44)"/>
    <property type="match status" value="1"/>
</dbReference>
<dbReference type="FunFam" id="2.40.50.140:FF:000125">
    <property type="entry name" value="exosome complex exonuclease RRP44 isoform X1"/>
    <property type="match status" value="1"/>
</dbReference>
<dbReference type="FunFam" id="2.40.50.690:FF:000002">
    <property type="entry name" value="exosome complex exonuclease RRP44 isoform X1"/>
    <property type="match status" value="1"/>
</dbReference>
<dbReference type="Gene3D" id="2.40.50.690">
    <property type="match status" value="1"/>
</dbReference>
<dbReference type="Gene3D" id="2.40.50.700">
    <property type="match status" value="1"/>
</dbReference>
<dbReference type="Gene3D" id="3.40.50.1010">
    <property type="entry name" value="5'-nuclease"/>
    <property type="match status" value="1"/>
</dbReference>
<dbReference type="Gene3D" id="2.40.50.140">
    <property type="entry name" value="Nucleic acid-binding proteins"/>
    <property type="match status" value="1"/>
</dbReference>
<dbReference type="InterPro" id="IPR041505">
    <property type="entry name" value="Dis3_CSD2"/>
</dbReference>
<dbReference type="InterPro" id="IPR012340">
    <property type="entry name" value="NA-bd_OB-fold"/>
</dbReference>
<dbReference type="InterPro" id="IPR029060">
    <property type="entry name" value="PIN-like_dom_sf"/>
</dbReference>
<dbReference type="InterPro" id="IPR002716">
    <property type="entry name" value="PIN_dom"/>
</dbReference>
<dbReference type="InterPro" id="IPR001900">
    <property type="entry name" value="RNase_II/R"/>
</dbReference>
<dbReference type="InterPro" id="IPR022966">
    <property type="entry name" value="RNase_II/R_CS"/>
</dbReference>
<dbReference type="InterPro" id="IPR050180">
    <property type="entry name" value="RNR_Ribonuclease"/>
</dbReference>
<dbReference type="InterPro" id="IPR033771">
    <property type="entry name" value="Rrp44_CSD1"/>
</dbReference>
<dbReference type="InterPro" id="IPR033770">
    <property type="entry name" value="RRP44_S1"/>
</dbReference>
<dbReference type="PANTHER" id="PTHR23355:SF35">
    <property type="entry name" value="EXOSOME COMPLEX EXONUCLEASE RRP44"/>
    <property type="match status" value="1"/>
</dbReference>
<dbReference type="PANTHER" id="PTHR23355">
    <property type="entry name" value="RIBONUCLEASE"/>
    <property type="match status" value="1"/>
</dbReference>
<dbReference type="Pfam" id="PF17849">
    <property type="entry name" value="OB_Dis3"/>
    <property type="match status" value="1"/>
</dbReference>
<dbReference type="Pfam" id="PF13638">
    <property type="entry name" value="PIN_4"/>
    <property type="match status" value="1"/>
</dbReference>
<dbReference type="Pfam" id="PF00773">
    <property type="entry name" value="RNB"/>
    <property type="match status" value="1"/>
</dbReference>
<dbReference type="Pfam" id="PF17216">
    <property type="entry name" value="Rrp44_CSD1"/>
    <property type="match status" value="1"/>
</dbReference>
<dbReference type="Pfam" id="PF17215">
    <property type="entry name" value="Rrp44_S1"/>
    <property type="match status" value="1"/>
</dbReference>
<dbReference type="SMART" id="SM00670">
    <property type="entry name" value="PINc"/>
    <property type="match status" value="1"/>
</dbReference>
<dbReference type="SMART" id="SM00955">
    <property type="entry name" value="RNB"/>
    <property type="match status" value="1"/>
</dbReference>
<dbReference type="SUPFAM" id="SSF50249">
    <property type="entry name" value="Nucleic acid-binding proteins"/>
    <property type="match status" value="3"/>
</dbReference>
<dbReference type="SUPFAM" id="SSF88723">
    <property type="entry name" value="PIN domain-like"/>
    <property type="match status" value="1"/>
</dbReference>
<dbReference type="PROSITE" id="PS01175">
    <property type="entry name" value="RIBONUCLEASE_II"/>
    <property type="match status" value="1"/>
</dbReference>
<evidence type="ECO:0000255" key="1"/>
<evidence type="ECO:0000256" key="2">
    <source>
        <dbReference type="SAM" id="MobiDB-lite"/>
    </source>
</evidence>
<evidence type="ECO:0000269" key="3">
    <source>
    </source>
</evidence>
<evidence type="ECO:0000269" key="4">
    <source>
    </source>
</evidence>
<evidence type="ECO:0000269" key="5">
    <source>
    </source>
</evidence>
<evidence type="ECO:0000269" key="6">
    <source>
    </source>
</evidence>
<evidence type="ECO:0000269" key="7">
    <source>
    </source>
</evidence>
<evidence type="ECO:0000269" key="8">
    <source>
    </source>
</evidence>
<evidence type="ECO:0000269" key="9">
    <source>
    </source>
</evidence>
<evidence type="ECO:0000269" key="10">
    <source>
    </source>
</evidence>
<evidence type="ECO:0000269" key="11">
    <source>
    </source>
</evidence>
<evidence type="ECO:0000269" key="12">
    <source>
    </source>
</evidence>
<evidence type="ECO:0000269" key="13">
    <source>
    </source>
</evidence>
<evidence type="ECO:0000269" key="14">
    <source>
    </source>
</evidence>
<evidence type="ECO:0000303" key="15">
    <source>
    </source>
</evidence>
<evidence type="ECO:0000305" key="16"/>
<evidence type="ECO:0007744" key="17">
    <source>
        <dbReference type="PDB" id="6D6Q"/>
    </source>
</evidence>
<evidence type="ECO:0007744" key="18">
    <source>
        <dbReference type="PDB" id="6D6R"/>
    </source>
</evidence>
<evidence type="ECO:0007744" key="19">
    <source>
        <dbReference type="PDB" id="6H25"/>
    </source>
</evidence>
<evidence type="ECO:0007744" key="20">
    <source>
    </source>
</evidence>
<evidence type="ECO:0007744" key="21">
    <source>
    </source>
</evidence>
<evidence type="ECO:0007744" key="22">
    <source>
    </source>
</evidence>
<evidence type="ECO:0007829" key="23">
    <source>
        <dbReference type="PDB" id="6D6Q"/>
    </source>
</evidence>
<evidence type="ECO:0007829" key="24">
    <source>
        <dbReference type="PDB" id="6D6R"/>
    </source>
</evidence>
<organism>
    <name type="scientific">Homo sapiens</name>
    <name type="common">Human</name>
    <dbReference type="NCBI Taxonomy" id="9606"/>
    <lineage>
        <taxon>Eukaryota</taxon>
        <taxon>Metazoa</taxon>
        <taxon>Chordata</taxon>
        <taxon>Craniata</taxon>
        <taxon>Vertebrata</taxon>
        <taxon>Euteleostomi</taxon>
        <taxon>Mammalia</taxon>
        <taxon>Eutheria</taxon>
        <taxon>Euarchontoglires</taxon>
        <taxon>Primates</taxon>
        <taxon>Haplorrhini</taxon>
        <taxon>Catarrhini</taxon>
        <taxon>Hominidae</taxon>
        <taxon>Homo</taxon>
    </lineage>
</organism>
<gene>
    <name type="primary">DIS3</name>
    <name type="synonym">KIAA1008</name>
    <name type="synonym">RRP44</name>
</gene>
<feature type="chain" id="PRO_0000166419" description="Exosome complex exonuclease RRP44">
    <location>
        <begin position="1"/>
        <end position="958"/>
    </location>
</feature>
<feature type="domain" description="PINc">
    <location>
        <begin position="64"/>
        <end position="182"/>
    </location>
</feature>
<feature type="domain" description="CSD1" evidence="1">
    <location>
        <begin position="227"/>
        <end position="319"/>
    </location>
</feature>
<feature type="domain" description="CSD2" evidence="1">
    <location>
        <begin position="372"/>
        <end position="438"/>
    </location>
</feature>
<feature type="domain" description="RNB" evidence="1">
    <location>
        <begin position="467"/>
        <end position="792"/>
    </location>
</feature>
<feature type="region of interest" description="Disordered" evidence="2">
    <location>
        <begin position="938"/>
        <end position="958"/>
    </location>
</feature>
<feature type="compositionally biased region" description="Basic residues" evidence="2">
    <location>
        <begin position="949"/>
        <end position="958"/>
    </location>
</feature>
<feature type="modified residue" description="N-acetylmethionine" evidence="21">
    <location>
        <position position="1"/>
    </location>
</feature>
<feature type="modified residue" description="N6-acetyllysine" evidence="20">
    <location>
        <position position="18"/>
    </location>
</feature>
<feature type="modified residue" description="Phosphoserine" evidence="22">
    <location>
        <position position="215"/>
    </location>
</feature>
<feature type="splice variant" id="VSP_014971" description="In isoform 2." evidence="15">
    <original>DVLEDPAIRNVIVLQTVLQEVRNRSAPVYKRIRDVTNNQEKHFYTFTNEHHR</original>
    <variation>VSAWRPGTWASVASSLRLPGSL</variation>
    <location>
        <begin position="78"/>
        <end position="129"/>
    </location>
</feature>
<feature type="sequence variant" id="VAR_023099" description="In dbSNP:rs4883918." evidence="4 6 8">
    <original>N</original>
    <variation>S</variation>
    <location>
        <position position="269"/>
    </location>
</feature>
<feature type="sequence variant" id="VAR_023100" description="In dbSNP:rs7332388." evidence="3 7">
    <original>T</original>
    <variation>R</variation>
    <location>
        <position position="326"/>
    </location>
</feature>
<feature type="mutagenesis site" description="Loss of endonuclease activity; when associated with N-487." evidence="10">
    <original>D</original>
    <variation>N</variation>
    <location>
        <position position="146"/>
    </location>
</feature>
<feature type="mutagenesis site" description="Loss of exonuclease activity. Loss of endonuclease activity; when associated with N-146." evidence="10">
    <original>D</original>
    <variation>N</variation>
    <location>
        <position position="487"/>
    </location>
</feature>
<feature type="sequence conflict" description="In Ref. 7; CAH56266." evidence="16" ref="7">
    <original>P</original>
    <variation>S</variation>
    <location>
        <position position="635"/>
    </location>
</feature>
<feature type="strand" evidence="23">
    <location>
        <begin position="2"/>
        <end position="10"/>
    </location>
</feature>
<feature type="strand" evidence="23">
    <location>
        <begin position="12"/>
        <end position="14"/>
    </location>
</feature>
<feature type="strand" evidence="23">
    <location>
        <begin position="16"/>
        <end position="24"/>
    </location>
</feature>
<feature type="helix" evidence="23">
    <location>
        <begin position="70"/>
        <end position="75"/>
    </location>
</feature>
<feature type="helix" evidence="23">
    <location>
        <begin position="77"/>
        <end position="81"/>
    </location>
</feature>
<feature type="strand" evidence="23">
    <location>
        <begin position="82"/>
        <end position="84"/>
    </location>
</feature>
<feature type="strand" evidence="23">
    <location>
        <begin position="87"/>
        <end position="90"/>
    </location>
</feature>
<feature type="helix" evidence="23">
    <location>
        <begin position="93"/>
        <end position="101"/>
    </location>
</feature>
<feature type="helix" evidence="23">
    <location>
        <begin position="103"/>
        <end position="113"/>
    </location>
</feature>
<feature type="strand" evidence="23">
    <location>
        <begin position="116"/>
        <end position="122"/>
    </location>
</feature>
<feature type="turn" evidence="23">
    <location>
        <begin position="129"/>
        <end position="131"/>
    </location>
</feature>
<feature type="helix" evidence="23">
    <location>
        <begin position="141"/>
        <end position="163"/>
    </location>
</feature>
<feature type="strand" evidence="23">
    <location>
        <begin position="166"/>
        <end position="168"/>
    </location>
</feature>
<feature type="strand" evidence="23">
    <location>
        <begin position="173"/>
        <end position="177"/>
    </location>
</feature>
<feature type="helix" evidence="23">
    <location>
        <begin position="178"/>
        <end position="186"/>
    </location>
</feature>
<feature type="helix" evidence="23">
    <location>
        <begin position="194"/>
        <end position="200"/>
    </location>
</feature>
<feature type="helix" evidence="23">
    <location>
        <begin position="206"/>
        <end position="209"/>
    </location>
</feature>
<feature type="helix" evidence="23">
    <location>
        <begin position="234"/>
        <end position="243"/>
    </location>
</feature>
<feature type="strand" evidence="23">
    <location>
        <begin position="247"/>
        <end position="252"/>
    </location>
</feature>
<feature type="strand" evidence="23">
    <location>
        <begin position="261"/>
        <end position="265"/>
    </location>
</feature>
<feature type="strand" evidence="23">
    <location>
        <begin position="274"/>
        <end position="277"/>
    </location>
</feature>
<feature type="turn" evidence="23">
    <location>
        <begin position="280"/>
        <end position="282"/>
    </location>
</feature>
<feature type="strand" evidence="23">
    <location>
        <begin position="291"/>
        <end position="296"/>
    </location>
</feature>
<feature type="strand" evidence="23">
    <location>
        <begin position="342"/>
        <end position="350"/>
    </location>
</feature>
<feature type="strand" evidence="23">
    <location>
        <begin position="356"/>
        <end position="361"/>
    </location>
</feature>
<feature type="strand" evidence="23">
    <location>
        <begin position="371"/>
        <end position="377"/>
    </location>
</feature>
<feature type="strand" evidence="23">
    <location>
        <begin position="383"/>
        <end position="385"/>
    </location>
</feature>
<feature type="strand" evidence="23">
    <location>
        <begin position="391"/>
        <end position="393"/>
    </location>
</feature>
<feature type="strand" evidence="23">
    <location>
        <begin position="396"/>
        <end position="404"/>
    </location>
</feature>
<feature type="strand" evidence="23">
    <location>
        <begin position="413"/>
        <end position="422"/>
    </location>
</feature>
<feature type="helix" evidence="23">
    <location>
        <begin position="426"/>
        <end position="436"/>
    </location>
</feature>
<feature type="helix" evidence="23">
    <location>
        <begin position="446"/>
        <end position="451"/>
    </location>
</feature>
<feature type="helix" evidence="23">
    <location>
        <begin position="463"/>
        <end position="465"/>
    </location>
</feature>
<feature type="strand" evidence="23">
    <location>
        <begin position="466"/>
        <end position="469"/>
    </location>
</feature>
<feature type="strand" evidence="23">
    <location>
        <begin position="489"/>
        <end position="494"/>
    </location>
</feature>
<feature type="strand" evidence="23">
    <location>
        <begin position="500"/>
        <end position="506"/>
    </location>
</feature>
<feature type="helix" evidence="23">
    <location>
        <begin position="509"/>
        <end position="511"/>
    </location>
</feature>
<feature type="helix" evidence="23">
    <location>
        <begin position="518"/>
        <end position="525"/>
    </location>
</feature>
<feature type="helix" evidence="23">
    <location>
        <begin position="542"/>
        <end position="546"/>
    </location>
</feature>
<feature type="strand" evidence="23">
    <location>
        <begin position="555"/>
        <end position="566"/>
    </location>
</feature>
<feature type="strand" evidence="23">
    <location>
        <begin position="574"/>
        <end position="585"/>
    </location>
</feature>
<feature type="helix" evidence="23">
    <location>
        <begin position="590"/>
        <end position="598"/>
    </location>
</feature>
<feature type="turn" evidence="23">
    <location>
        <begin position="604"/>
        <end position="606"/>
    </location>
</feature>
<feature type="helix" evidence="23">
    <location>
        <begin position="607"/>
        <end position="626"/>
    </location>
</feature>
<feature type="helix" evidence="23">
    <location>
        <begin position="658"/>
        <end position="681"/>
    </location>
</feature>
<feature type="strand" evidence="23">
    <location>
        <begin position="683"/>
        <end position="685"/>
    </location>
</feature>
<feature type="strand" evidence="23">
    <location>
        <begin position="688"/>
        <end position="691"/>
    </location>
</feature>
<feature type="turn" evidence="23">
    <location>
        <begin position="696"/>
        <end position="699"/>
    </location>
</feature>
<feature type="helix" evidence="23">
    <location>
        <begin position="700"/>
        <end position="708"/>
    </location>
</feature>
<feature type="helix" evidence="23">
    <location>
        <begin position="718"/>
        <end position="725"/>
    </location>
</feature>
<feature type="helix" evidence="23">
    <location>
        <begin position="737"/>
        <end position="745"/>
    </location>
</feature>
<feature type="strand" evidence="23">
    <location>
        <begin position="752"/>
        <end position="754"/>
    </location>
</feature>
<feature type="turn" evidence="23">
    <location>
        <begin position="756"/>
        <end position="758"/>
    </location>
</feature>
<feature type="turn" evidence="23">
    <location>
        <begin position="765"/>
        <end position="767"/>
    </location>
</feature>
<feature type="helix" evidence="23">
    <location>
        <begin position="783"/>
        <end position="795"/>
    </location>
</feature>
<feature type="helix" evidence="23">
    <location>
        <begin position="802"/>
        <end position="804"/>
    </location>
</feature>
<feature type="helix" evidence="23">
    <location>
        <begin position="807"/>
        <end position="842"/>
    </location>
</feature>
<feature type="strand" evidence="23">
    <location>
        <begin position="846"/>
        <end position="848"/>
    </location>
</feature>
<feature type="strand" evidence="23">
    <location>
        <begin position="857"/>
        <end position="859"/>
    </location>
</feature>
<feature type="strand" evidence="23">
    <location>
        <begin position="862"/>
        <end position="864"/>
    </location>
</feature>
<feature type="turn" evidence="23">
    <location>
        <begin position="865"/>
        <end position="868"/>
    </location>
</feature>
<feature type="strand" evidence="23">
    <location>
        <begin position="869"/>
        <end position="871"/>
    </location>
</feature>
<feature type="strand" evidence="24">
    <location>
        <begin position="886"/>
        <end position="888"/>
    </location>
</feature>
<feature type="turn" evidence="23">
    <location>
        <begin position="889"/>
        <end position="892"/>
    </location>
</feature>
<feature type="strand" evidence="23">
    <location>
        <begin position="893"/>
        <end position="895"/>
    </location>
</feature>
<feature type="strand" evidence="23">
    <location>
        <begin position="908"/>
        <end position="911"/>
    </location>
</feature>
<feature type="strand" evidence="23">
    <location>
        <begin position="916"/>
        <end position="918"/>
    </location>
</feature>
<feature type="strand" evidence="23">
    <location>
        <begin position="925"/>
        <end position="928"/>
    </location>
</feature>
<accession>Q9Y2L1</accession>
<accession>A6NI21</accession>
<accession>B2RBL2</accession>
<accession>Q5W0P7</accession>
<accession>Q5W0P8</accession>
<accession>Q658Z7</accession>
<accession>Q7Z481</accession>
<accession>Q8WWI2</accession>
<accession>Q9UG36</accession>